<organism>
    <name type="scientific">Caenorhabditis elegans</name>
    <dbReference type="NCBI Taxonomy" id="6239"/>
    <lineage>
        <taxon>Eukaryota</taxon>
        <taxon>Metazoa</taxon>
        <taxon>Ecdysozoa</taxon>
        <taxon>Nematoda</taxon>
        <taxon>Chromadorea</taxon>
        <taxon>Rhabditida</taxon>
        <taxon>Rhabditina</taxon>
        <taxon>Rhabditomorpha</taxon>
        <taxon>Rhabditoidea</taxon>
        <taxon>Rhabditidae</taxon>
        <taxon>Peloderinae</taxon>
        <taxon>Caenorhabditis</taxon>
    </lineage>
</organism>
<comment type="function">
    <text>Not known. Putative receptor.</text>
</comment>
<comment type="subcellular location">
    <subcellularLocation>
        <location evidence="3">Cell membrane</location>
        <topology evidence="3">Multi-pass membrane protein</topology>
    </subcellularLocation>
</comment>
<comment type="similarity">
    <text evidence="2">Belongs to the G-protein coupled receptor 1 family.</text>
</comment>
<name>YT66_CAEEL</name>
<dbReference type="EMBL" id="FO080238">
    <property type="protein sequence ID" value="CCD62253.1"/>
    <property type="molecule type" value="Genomic_DNA"/>
</dbReference>
<dbReference type="PIR" id="T15356">
    <property type="entry name" value="T15356"/>
</dbReference>
<dbReference type="RefSeq" id="NP_741869.1">
    <property type="nucleotide sequence ID" value="NM_171750.8"/>
</dbReference>
<dbReference type="SMR" id="Q11082"/>
<dbReference type="FunCoup" id="Q11082">
    <property type="interactions" value="10"/>
</dbReference>
<dbReference type="STRING" id="6239.B0563.6a.1"/>
<dbReference type="PaxDb" id="6239-B0563.6a"/>
<dbReference type="EnsemblMetazoa" id="B0563.6a.1">
    <property type="protein sequence ID" value="B0563.6a.1"/>
    <property type="gene ID" value="WBGene00015263"/>
</dbReference>
<dbReference type="GeneID" id="182040"/>
<dbReference type="KEGG" id="cel:CELE_B0563.6"/>
<dbReference type="UCSC" id="B0563.6c">
    <property type="organism name" value="c. elegans"/>
</dbReference>
<dbReference type="AGR" id="WB:WBGene00015263"/>
<dbReference type="CTD" id="182040"/>
<dbReference type="WormBase" id="B0563.6a">
    <property type="protein sequence ID" value="CE29551"/>
    <property type="gene ID" value="WBGene00015263"/>
</dbReference>
<dbReference type="eggNOG" id="KOG3656">
    <property type="taxonomic scope" value="Eukaryota"/>
</dbReference>
<dbReference type="InParanoid" id="Q11082"/>
<dbReference type="OMA" id="MVHFAKV"/>
<dbReference type="OrthoDB" id="10033446at2759"/>
<dbReference type="PhylomeDB" id="Q11082"/>
<dbReference type="PRO" id="PR:Q11082"/>
<dbReference type="Proteomes" id="UP000001940">
    <property type="component" value="Chromosome X"/>
</dbReference>
<dbReference type="Bgee" id="WBGene00015263">
    <property type="expression patterns" value="Expressed in larva and 3 other cell types or tissues"/>
</dbReference>
<dbReference type="ExpressionAtlas" id="Q11082">
    <property type="expression patterns" value="baseline and differential"/>
</dbReference>
<dbReference type="GO" id="GO:0005886">
    <property type="term" value="C:plasma membrane"/>
    <property type="evidence" value="ECO:0007669"/>
    <property type="project" value="UniProtKB-SubCell"/>
</dbReference>
<dbReference type="GO" id="GO:0004930">
    <property type="term" value="F:G protein-coupled receptor activity"/>
    <property type="evidence" value="ECO:0007669"/>
    <property type="project" value="UniProtKB-KW"/>
</dbReference>
<dbReference type="CDD" id="cd14978">
    <property type="entry name" value="7tmA_FMRFamide_R-like"/>
    <property type="match status" value="1"/>
</dbReference>
<dbReference type="Gene3D" id="1.20.1070.10">
    <property type="entry name" value="Rhodopsin 7-helix transmembrane proteins"/>
    <property type="match status" value="1"/>
</dbReference>
<dbReference type="InterPro" id="IPR053093">
    <property type="entry name" value="GPCR-like"/>
</dbReference>
<dbReference type="InterPro" id="IPR000276">
    <property type="entry name" value="GPCR_Rhodpsn"/>
</dbReference>
<dbReference type="InterPro" id="IPR017452">
    <property type="entry name" value="GPCR_Rhodpsn_7TM"/>
</dbReference>
<dbReference type="PANTHER" id="PTHR47760">
    <property type="entry name" value="G-PROTEIN COUPLED RECEPTOR B0563.6-LIKE PROTEIN-RELATED"/>
    <property type="match status" value="1"/>
</dbReference>
<dbReference type="PANTHER" id="PTHR47760:SF2">
    <property type="entry name" value="G-PROTEIN COUPLED RECEPTOR B0563.6-RELATED"/>
    <property type="match status" value="1"/>
</dbReference>
<dbReference type="Pfam" id="PF00001">
    <property type="entry name" value="7tm_1"/>
    <property type="match status" value="1"/>
</dbReference>
<dbReference type="PRINTS" id="PR00237">
    <property type="entry name" value="GPCRRHODOPSN"/>
</dbReference>
<dbReference type="SMART" id="SM01381">
    <property type="entry name" value="7TM_GPCR_Srsx"/>
    <property type="match status" value="1"/>
</dbReference>
<dbReference type="SUPFAM" id="SSF81321">
    <property type="entry name" value="Family A G protein-coupled receptor-like"/>
    <property type="match status" value="1"/>
</dbReference>
<dbReference type="PROSITE" id="PS00237">
    <property type="entry name" value="G_PROTEIN_RECEP_F1_1"/>
    <property type="match status" value="1"/>
</dbReference>
<dbReference type="PROSITE" id="PS50262">
    <property type="entry name" value="G_PROTEIN_RECEP_F1_2"/>
    <property type="match status" value="1"/>
</dbReference>
<accession>Q11082</accession>
<protein>
    <recommendedName>
        <fullName>Probable G-protein coupled receptor B0563.6</fullName>
    </recommendedName>
</protein>
<sequence>MSLSGQLWKMVNSTSPNAAATVGNIAYCYVLPCICAIGIVGNITNLMVLASRRLRAVSYMYLRALAVADLLCMLFVLVFVSTEYLAKNGSSINQYKLYQIYQCHLMLTLINWALGAGVYVVVALSLERYISIVFPMHFRTWNSPQRATRAIVIAFLIPAIFYVPYAITRYKGKQRFDLLQNVTIYSMDDHPIYTTFYWQIYKWTREAILRFLPIIILTVLNIQIMIAFRKRQKMFQQLTNKRKEQGTQKDDTLMYMLGGTVLMSLVCNIPAAINLLLIDETLKKRLDYQIFRAVANILEITNHASQFYVFCACSTDYRTTFLQKFPCFKTDYANRDRLRSFVRRTQSVIQKQGSVEHTTNSKVWIMFKNKFQRDSLSHHSRKFSRHMPIEQDTVDIQLASGEQSTSGEMCEADTLIKYGGTAQLCNDENNTTFL</sequence>
<gene>
    <name type="ORF">B0563.6</name>
</gene>
<proteinExistence type="inferred from homology"/>
<feature type="chain" id="PRO_0000070233" description="Probable G-protein coupled receptor B0563.6">
    <location>
        <begin position="1"/>
        <end position="434"/>
    </location>
</feature>
<feature type="transmembrane region" description="Helical" evidence="1">
    <location>
        <begin position="30"/>
        <end position="50"/>
    </location>
</feature>
<feature type="transmembrane region" description="Helical" evidence="1">
    <location>
        <begin position="65"/>
        <end position="85"/>
    </location>
</feature>
<feature type="transmembrane region" description="Helical" evidence="1">
    <location>
        <begin position="105"/>
        <end position="125"/>
    </location>
</feature>
<feature type="transmembrane region" description="Helical" evidence="1">
    <location>
        <begin position="147"/>
        <end position="167"/>
    </location>
</feature>
<feature type="transmembrane region" description="Helical" evidence="1">
    <location>
        <begin position="208"/>
        <end position="228"/>
    </location>
</feature>
<feature type="transmembrane region" description="Helical" evidence="1">
    <location>
        <begin position="258"/>
        <end position="278"/>
    </location>
</feature>
<feature type="glycosylation site" description="N-linked (GlcNAc...) asparagine" evidence="1">
    <location>
        <position position="12"/>
    </location>
</feature>
<feature type="glycosylation site" description="N-linked (GlcNAc...) asparagine" evidence="1">
    <location>
        <position position="88"/>
    </location>
</feature>
<feature type="glycosylation site" description="N-linked (GlcNAc...) asparagine" evidence="1">
    <location>
        <position position="181"/>
    </location>
</feature>
<feature type="glycosylation site" description="N-linked (GlcNAc...) asparagine" evidence="1">
    <location>
        <position position="429"/>
    </location>
</feature>
<feature type="glycosylation site" description="N-linked (GlcNAc...) asparagine" evidence="1">
    <location>
        <position position="430"/>
    </location>
</feature>
<keyword id="KW-1003">Cell membrane</keyword>
<keyword id="KW-0297">G-protein coupled receptor</keyword>
<keyword id="KW-0325">Glycoprotein</keyword>
<keyword id="KW-0472">Membrane</keyword>
<keyword id="KW-0675">Receptor</keyword>
<keyword id="KW-1185">Reference proteome</keyword>
<keyword id="KW-0807">Transducer</keyword>
<keyword id="KW-0812">Transmembrane</keyword>
<keyword id="KW-1133">Transmembrane helix</keyword>
<reference key="1">
    <citation type="journal article" date="1998" name="Science">
        <title>Genome sequence of the nematode C. elegans: a platform for investigating biology.</title>
        <authorList>
            <consortium name="The C. elegans sequencing consortium"/>
        </authorList>
    </citation>
    <scope>NUCLEOTIDE SEQUENCE [LARGE SCALE GENOMIC DNA]</scope>
    <source>
        <strain>Bristol N2</strain>
    </source>
</reference>
<evidence type="ECO:0000255" key="1"/>
<evidence type="ECO:0000255" key="2">
    <source>
        <dbReference type="PROSITE-ProRule" id="PRU00521"/>
    </source>
</evidence>
<evidence type="ECO:0000305" key="3"/>